<evidence type="ECO:0000255" key="1">
    <source>
        <dbReference type="HAMAP-Rule" id="MF_01224"/>
    </source>
</evidence>
<feature type="chain" id="PRO_1000073156" description="Cyclic pyranopterin monophosphate synthase">
    <location>
        <begin position="1"/>
        <end position="161"/>
    </location>
</feature>
<feature type="active site" evidence="1">
    <location>
        <position position="131"/>
    </location>
</feature>
<feature type="binding site" evidence="1">
    <location>
        <begin position="78"/>
        <end position="80"/>
    </location>
    <ligand>
        <name>substrate</name>
    </ligand>
</feature>
<feature type="binding site" evidence="1">
    <location>
        <begin position="116"/>
        <end position="117"/>
    </location>
    <ligand>
        <name>substrate</name>
    </ligand>
</feature>
<accession>Q7VVF8</accession>
<dbReference type="EC" id="4.6.1.17" evidence="1"/>
<dbReference type="EMBL" id="BX640419">
    <property type="protein sequence ID" value="CAE42988.1"/>
    <property type="molecule type" value="Genomic_DNA"/>
</dbReference>
<dbReference type="RefSeq" id="NP_881319.1">
    <property type="nucleotide sequence ID" value="NC_002929.2"/>
</dbReference>
<dbReference type="RefSeq" id="WP_003819741.1">
    <property type="nucleotide sequence ID" value="NZ_CP039022.1"/>
</dbReference>
<dbReference type="SMR" id="Q7VVF8"/>
<dbReference type="STRING" id="257313.BP2711"/>
<dbReference type="PaxDb" id="257313-BP2711"/>
<dbReference type="GeneID" id="69602613"/>
<dbReference type="KEGG" id="bpe:BP2711"/>
<dbReference type="PATRIC" id="fig|257313.5.peg.2920"/>
<dbReference type="eggNOG" id="COG0315">
    <property type="taxonomic scope" value="Bacteria"/>
</dbReference>
<dbReference type="HOGENOM" id="CLU_074693_1_1_4"/>
<dbReference type="UniPathway" id="UPA00344"/>
<dbReference type="Proteomes" id="UP000002676">
    <property type="component" value="Chromosome"/>
</dbReference>
<dbReference type="GO" id="GO:0061799">
    <property type="term" value="F:cyclic pyranopterin monophosphate synthase activity"/>
    <property type="evidence" value="ECO:0007669"/>
    <property type="project" value="UniProtKB-UniRule"/>
</dbReference>
<dbReference type="GO" id="GO:0006777">
    <property type="term" value="P:Mo-molybdopterin cofactor biosynthetic process"/>
    <property type="evidence" value="ECO:0007669"/>
    <property type="project" value="UniProtKB-UniRule"/>
</dbReference>
<dbReference type="CDD" id="cd01420">
    <property type="entry name" value="MoaC_PE"/>
    <property type="match status" value="1"/>
</dbReference>
<dbReference type="Gene3D" id="3.30.70.640">
    <property type="entry name" value="Molybdopterin cofactor biosynthesis C (MoaC) domain"/>
    <property type="match status" value="1"/>
</dbReference>
<dbReference type="HAMAP" id="MF_01224_B">
    <property type="entry name" value="MoaC_B"/>
    <property type="match status" value="1"/>
</dbReference>
<dbReference type="InterPro" id="IPR023045">
    <property type="entry name" value="MoaC"/>
</dbReference>
<dbReference type="InterPro" id="IPR047594">
    <property type="entry name" value="MoaC_bact/euk"/>
</dbReference>
<dbReference type="InterPro" id="IPR036522">
    <property type="entry name" value="MoaC_sf"/>
</dbReference>
<dbReference type="InterPro" id="IPR050105">
    <property type="entry name" value="MoCo_biosynth_MoaA/MoaC"/>
</dbReference>
<dbReference type="InterPro" id="IPR002820">
    <property type="entry name" value="Mopterin_CF_biosynth-C_dom"/>
</dbReference>
<dbReference type="NCBIfam" id="TIGR00581">
    <property type="entry name" value="moaC"/>
    <property type="match status" value="1"/>
</dbReference>
<dbReference type="NCBIfam" id="NF006870">
    <property type="entry name" value="PRK09364.1"/>
    <property type="match status" value="1"/>
</dbReference>
<dbReference type="PANTHER" id="PTHR22960:SF29">
    <property type="entry name" value="CYCLIC PYRANOPTERIN MONOPHOSPHATE SYNTHASE"/>
    <property type="match status" value="1"/>
</dbReference>
<dbReference type="PANTHER" id="PTHR22960">
    <property type="entry name" value="MOLYBDOPTERIN COFACTOR SYNTHESIS PROTEIN A"/>
    <property type="match status" value="1"/>
</dbReference>
<dbReference type="Pfam" id="PF01967">
    <property type="entry name" value="MoaC"/>
    <property type="match status" value="1"/>
</dbReference>
<dbReference type="SUPFAM" id="SSF55040">
    <property type="entry name" value="Molybdenum cofactor biosynthesis protein C, MoaC"/>
    <property type="match status" value="1"/>
</dbReference>
<keyword id="KW-0456">Lyase</keyword>
<keyword id="KW-0501">Molybdenum cofactor biosynthesis</keyword>
<keyword id="KW-1185">Reference proteome</keyword>
<sequence length="161" mass="17349">MSTTPTLSHLDESGQIRMVDVGHKTDTDRVAIARGSVRMNATAYGLLTQPGQGKGEVLNTARVAAVLAAKRCAELIPLCHSLPLAFVGIDFELDEAAHSVHIRATCRTQYKTGVEMEAMTACSVAALTIYDMCKAADKGIVIEQIRLQYKAGGKSGEWRND</sequence>
<comment type="function">
    <text evidence="1">Catalyzes the conversion of (8S)-3',8-cyclo-7,8-dihydroguanosine 5'-triphosphate to cyclic pyranopterin monophosphate (cPMP).</text>
</comment>
<comment type="catalytic activity">
    <reaction evidence="1">
        <text>(8S)-3',8-cyclo-7,8-dihydroguanosine 5'-triphosphate = cyclic pyranopterin phosphate + diphosphate</text>
        <dbReference type="Rhea" id="RHEA:49580"/>
        <dbReference type="ChEBI" id="CHEBI:33019"/>
        <dbReference type="ChEBI" id="CHEBI:59648"/>
        <dbReference type="ChEBI" id="CHEBI:131766"/>
        <dbReference type="EC" id="4.6.1.17"/>
    </reaction>
</comment>
<comment type="pathway">
    <text evidence="1">Cofactor biosynthesis; molybdopterin biosynthesis.</text>
</comment>
<comment type="subunit">
    <text evidence="1">Homohexamer; trimer of dimers.</text>
</comment>
<comment type="similarity">
    <text evidence="1">Belongs to the MoaC family.</text>
</comment>
<organism>
    <name type="scientific">Bordetella pertussis (strain Tohama I / ATCC BAA-589 / NCTC 13251)</name>
    <dbReference type="NCBI Taxonomy" id="257313"/>
    <lineage>
        <taxon>Bacteria</taxon>
        <taxon>Pseudomonadati</taxon>
        <taxon>Pseudomonadota</taxon>
        <taxon>Betaproteobacteria</taxon>
        <taxon>Burkholderiales</taxon>
        <taxon>Alcaligenaceae</taxon>
        <taxon>Bordetella</taxon>
    </lineage>
</organism>
<gene>
    <name evidence="1" type="primary">moaC</name>
    <name type="ordered locus">BP2711</name>
</gene>
<reference key="1">
    <citation type="journal article" date="2003" name="Nat. Genet.">
        <title>Comparative analysis of the genome sequences of Bordetella pertussis, Bordetella parapertussis and Bordetella bronchiseptica.</title>
        <authorList>
            <person name="Parkhill J."/>
            <person name="Sebaihia M."/>
            <person name="Preston A."/>
            <person name="Murphy L.D."/>
            <person name="Thomson N.R."/>
            <person name="Harris D.E."/>
            <person name="Holden M.T.G."/>
            <person name="Churcher C.M."/>
            <person name="Bentley S.D."/>
            <person name="Mungall K.L."/>
            <person name="Cerdeno-Tarraga A.-M."/>
            <person name="Temple L."/>
            <person name="James K.D."/>
            <person name="Harris B."/>
            <person name="Quail M.A."/>
            <person name="Achtman M."/>
            <person name="Atkin R."/>
            <person name="Baker S."/>
            <person name="Basham D."/>
            <person name="Bason N."/>
            <person name="Cherevach I."/>
            <person name="Chillingworth T."/>
            <person name="Collins M."/>
            <person name="Cronin A."/>
            <person name="Davis P."/>
            <person name="Doggett J."/>
            <person name="Feltwell T."/>
            <person name="Goble A."/>
            <person name="Hamlin N."/>
            <person name="Hauser H."/>
            <person name="Holroyd S."/>
            <person name="Jagels K."/>
            <person name="Leather S."/>
            <person name="Moule S."/>
            <person name="Norberczak H."/>
            <person name="O'Neil S."/>
            <person name="Ormond D."/>
            <person name="Price C."/>
            <person name="Rabbinowitsch E."/>
            <person name="Rutter S."/>
            <person name="Sanders M."/>
            <person name="Saunders D."/>
            <person name="Seeger K."/>
            <person name="Sharp S."/>
            <person name="Simmonds M."/>
            <person name="Skelton J."/>
            <person name="Squares R."/>
            <person name="Squares S."/>
            <person name="Stevens K."/>
            <person name="Unwin L."/>
            <person name="Whitehead S."/>
            <person name="Barrell B.G."/>
            <person name="Maskell D.J."/>
        </authorList>
    </citation>
    <scope>NUCLEOTIDE SEQUENCE [LARGE SCALE GENOMIC DNA]</scope>
    <source>
        <strain>Tohama I / ATCC BAA-589 / NCTC 13251</strain>
    </source>
</reference>
<proteinExistence type="inferred from homology"/>
<protein>
    <recommendedName>
        <fullName evidence="1">Cyclic pyranopterin monophosphate synthase</fullName>
        <ecNumber evidence="1">4.6.1.17</ecNumber>
    </recommendedName>
    <alternativeName>
        <fullName evidence="1">Molybdenum cofactor biosynthesis protein C</fullName>
    </alternativeName>
</protein>
<name>MOAC_BORPE</name>